<gene>
    <name evidence="6" type="primary">FQR1</name>
    <name evidence="9" type="ordered locus">At5g54500</name>
    <name evidence="10" type="ORF">F24B18.12</name>
</gene>
<organism>
    <name type="scientific">Arabidopsis thaliana</name>
    <name type="common">Mouse-ear cress</name>
    <dbReference type="NCBI Taxonomy" id="3702"/>
    <lineage>
        <taxon>Eukaryota</taxon>
        <taxon>Viridiplantae</taxon>
        <taxon>Streptophyta</taxon>
        <taxon>Embryophyta</taxon>
        <taxon>Tracheophyta</taxon>
        <taxon>Spermatophyta</taxon>
        <taxon>Magnoliopsida</taxon>
        <taxon>eudicotyledons</taxon>
        <taxon>Gunneridae</taxon>
        <taxon>Pentapetalae</taxon>
        <taxon>rosids</taxon>
        <taxon>malvids</taxon>
        <taxon>Brassicales</taxon>
        <taxon>Brassicaceae</taxon>
        <taxon>Camelineae</taxon>
        <taxon>Arabidopsis</taxon>
    </lineage>
</organism>
<comment type="function">
    <text evidence="3">Catalyzes the transfer of electrons from NADH and NADPH to several quinones in vitro. May act as detoxification enzyme, and protect against auxin-induced oxidative stress.</text>
</comment>
<comment type="catalytic activity">
    <reaction evidence="3">
        <text>a quinone + NADH + H(+) = a quinol + NAD(+)</text>
        <dbReference type="Rhea" id="RHEA:46160"/>
        <dbReference type="ChEBI" id="CHEBI:15378"/>
        <dbReference type="ChEBI" id="CHEBI:24646"/>
        <dbReference type="ChEBI" id="CHEBI:57540"/>
        <dbReference type="ChEBI" id="CHEBI:57945"/>
        <dbReference type="ChEBI" id="CHEBI:132124"/>
        <dbReference type="EC" id="1.6.5.2"/>
    </reaction>
</comment>
<comment type="catalytic activity">
    <reaction evidence="3">
        <text>a quinone + NADPH + H(+) = a quinol + NADP(+)</text>
        <dbReference type="Rhea" id="RHEA:46164"/>
        <dbReference type="ChEBI" id="CHEBI:15378"/>
        <dbReference type="ChEBI" id="CHEBI:24646"/>
        <dbReference type="ChEBI" id="CHEBI:57783"/>
        <dbReference type="ChEBI" id="CHEBI:58349"/>
        <dbReference type="ChEBI" id="CHEBI:132124"/>
        <dbReference type="EC" id="1.6.5.2"/>
    </reaction>
</comment>
<comment type="cofactor">
    <cofactor evidence="8">
        <name>FMN</name>
        <dbReference type="ChEBI" id="CHEBI:58210"/>
    </cofactor>
    <text evidence="8">Binds 1 FMN per monomer.</text>
</comment>
<comment type="subcellular location">
    <subcellularLocation>
        <location evidence="4">Cell membrane</location>
    </subcellularLocation>
</comment>
<comment type="alternative products">
    <event type="alternative splicing"/>
    <isoform>
        <id>Q9LSQ5-1</id>
        <name>1</name>
        <sequence type="displayed"/>
    </isoform>
    <text>A number of isoforms are produced. According to EST sequences.</text>
</comment>
<comment type="disruption phenotype">
    <text evidence="5">No visible phenotype under normal growth conditions, but mutant plants have increased resistance to the necrotrophic fungus Botrytis cinerea.</text>
</comment>
<comment type="similarity">
    <text evidence="7">Belongs to the WrbA family.</text>
</comment>
<dbReference type="EC" id="1.6.5.2" evidence="3"/>
<dbReference type="EMBL" id="AB026634">
    <property type="protein sequence ID" value="BAA97523.1"/>
    <property type="molecule type" value="Genomic_DNA"/>
</dbReference>
<dbReference type="EMBL" id="CP002688">
    <property type="protein sequence ID" value="AED96502.1"/>
    <property type="molecule type" value="Genomic_DNA"/>
</dbReference>
<dbReference type="EMBL" id="AY120735">
    <property type="protein sequence ID" value="AAM53293.1"/>
    <property type="molecule type" value="mRNA"/>
</dbReference>
<dbReference type="EMBL" id="BT002194">
    <property type="protein sequence ID" value="AAN72205.1"/>
    <property type="molecule type" value="mRNA"/>
</dbReference>
<dbReference type="RefSeq" id="NP_200261.1">
    <molecule id="Q9LSQ5-1"/>
    <property type="nucleotide sequence ID" value="NM_124830.6"/>
</dbReference>
<dbReference type="SMR" id="Q9LSQ5"/>
<dbReference type="FunCoup" id="Q9LSQ5">
    <property type="interactions" value="1021"/>
</dbReference>
<dbReference type="STRING" id="3702.Q9LSQ5"/>
<dbReference type="iPTMnet" id="Q9LSQ5"/>
<dbReference type="ProMEX" id="Q9LSQ5"/>
<dbReference type="ProteomicsDB" id="230560">
    <molecule id="Q9LSQ5-1"/>
</dbReference>
<dbReference type="EnsemblPlants" id="AT5G54500.1">
    <molecule id="Q9LSQ5-1"/>
    <property type="protein sequence ID" value="AT5G54500.1"/>
    <property type="gene ID" value="AT5G54500"/>
</dbReference>
<dbReference type="GeneID" id="835538"/>
<dbReference type="Gramene" id="AT5G54500.1">
    <molecule id="Q9LSQ5-1"/>
    <property type="protein sequence ID" value="AT5G54500.1"/>
    <property type="gene ID" value="AT5G54500"/>
</dbReference>
<dbReference type="KEGG" id="ath:AT5G54500"/>
<dbReference type="Araport" id="AT5G54500"/>
<dbReference type="TAIR" id="AT5G54500">
    <property type="gene designation" value="FQR1"/>
</dbReference>
<dbReference type="HOGENOM" id="CLU_051402_0_1_1"/>
<dbReference type="InParanoid" id="Q9LSQ5"/>
<dbReference type="OMA" id="GMFELEQ"/>
<dbReference type="PhylomeDB" id="Q9LSQ5"/>
<dbReference type="BioCyc" id="ARA:AT5G54500-MONOMER"/>
<dbReference type="PRO" id="PR:Q9LSQ5"/>
<dbReference type="Proteomes" id="UP000006548">
    <property type="component" value="Chromosome 5"/>
</dbReference>
<dbReference type="ExpressionAtlas" id="Q9LSQ5">
    <property type="expression patterns" value="baseline and differential"/>
</dbReference>
<dbReference type="GO" id="GO:0005886">
    <property type="term" value="C:plasma membrane"/>
    <property type="evidence" value="ECO:0007669"/>
    <property type="project" value="UniProtKB-SubCell"/>
</dbReference>
<dbReference type="GO" id="GO:0010181">
    <property type="term" value="F:FMN binding"/>
    <property type="evidence" value="ECO:0007669"/>
    <property type="project" value="InterPro"/>
</dbReference>
<dbReference type="GO" id="GO:0003955">
    <property type="term" value="F:NAD(P)H dehydrogenase (quinone) activity"/>
    <property type="evidence" value="ECO:0000314"/>
    <property type="project" value="UniProtKB"/>
</dbReference>
<dbReference type="GO" id="GO:0050136">
    <property type="term" value="F:NADH:ubiquinone reductase (non-electrogenic) activity"/>
    <property type="evidence" value="ECO:0007669"/>
    <property type="project" value="RHEA"/>
</dbReference>
<dbReference type="GO" id="GO:0008753">
    <property type="term" value="F:NADPH dehydrogenase (quinone) activity"/>
    <property type="evidence" value="ECO:0007669"/>
    <property type="project" value="RHEA"/>
</dbReference>
<dbReference type="GO" id="GO:0071365">
    <property type="term" value="P:cellular response to auxin stimulus"/>
    <property type="evidence" value="ECO:0000314"/>
    <property type="project" value="UniProtKB"/>
</dbReference>
<dbReference type="GO" id="GO:0006979">
    <property type="term" value="P:response to oxidative stress"/>
    <property type="evidence" value="ECO:0000314"/>
    <property type="project" value="UniProtKB"/>
</dbReference>
<dbReference type="FunFam" id="3.40.50.360:FF:000001">
    <property type="entry name" value="NAD(P)H dehydrogenase (Quinone) FQR1-like"/>
    <property type="match status" value="1"/>
</dbReference>
<dbReference type="Gene3D" id="3.40.50.360">
    <property type="match status" value="1"/>
</dbReference>
<dbReference type="InterPro" id="IPR008254">
    <property type="entry name" value="Flavodoxin/NO_synth"/>
</dbReference>
<dbReference type="InterPro" id="IPR029039">
    <property type="entry name" value="Flavoprotein-like_sf"/>
</dbReference>
<dbReference type="InterPro" id="IPR010089">
    <property type="entry name" value="Flavoprotein_WrbA-like"/>
</dbReference>
<dbReference type="InterPro" id="IPR005025">
    <property type="entry name" value="FMN_Rdtase-like_dom"/>
</dbReference>
<dbReference type="NCBIfam" id="TIGR01755">
    <property type="entry name" value="flav_wrbA"/>
    <property type="match status" value="1"/>
</dbReference>
<dbReference type="NCBIfam" id="NF002999">
    <property type="entry name" value="PRK03767.1"/>
    <property type="match status" value="1"/>
</dbReference>
<dbReference type="PANTHER" id="PTHR30546">
    <property type="entry name" value="FLAVODOXIN-RELATED PROTEIN WRBA-RELATED"/>
    <property type="match status" value="1"/>
</dbReference>
<dbReference type="PANTHER" id="PTHR30546:SF23">
    <property type="entry name" value="FLAVOPROTEIN-LIKE PROTEIN YCP4-RELATED"/>
    <property type="match status" value="1"/>
</dbReference>
<dbReference type="Pfam" id="PF03358">
    <property type="entry name" value="FMN_red"/>
    <property type="match status" value="1"/>
</dbReference>
<dbReference type="SUPFAM" id="SSF52218">
    <property type="entry name" value="Flavoproteins"/>
    <property type="match status" value="1"/>
</dbReference>
<dbReference type="PROSITE" id="PS50902">
    <property type="entry name" value="FLAVODOXIN_LIKE"/>
    <property type="match status" value="1"/>
</dbReference>
<reference key="1">
    <citation type="submission" date="2011-04" db="EMBL/GenBank/DDBJ databases">
        <title>Structural analysis of Arabidopsis thaliana chromosome 5. XI.</title>
        <authorList>
            <person name="Kaneko T."/>
            <person name="Katoh T."/>
            <person name="Asamizu E."/>
            <person name="Sato S."/>
            <person name="Nakamura Y."/>
            <person name="Kotani H."/>
            <person name="Tabata S."/>
        </authorList>
    </citation>
    <scope>NUCLEOTIDE SEQUENCE [LARGE SCALE GENOMIC DNA]</scope>
    <source>
        <strain>cv. Columbia</strain>
    </source>
</reference>
<reference key="2">
    <citation type="journal article" date="2017" name="Plant J.">
        <title>Araport11: a complete reannotation of the Arabidopsis thaliana reference genome.</title>
        <authorList>
            <person name="Cheng C.Y."/>
            <person name="Krishnakumar V."/>
            <person name="Chan A.P."/>
            <person name="Thibaud-Nissen F."/>
            <person name="Schobel S."/>
            <person name="Town C.D."/>
        </authorList>
    </citation>
    <scope>GENOME REANNOTATION</scope>
    <source>
        <strain>cv. Columbia</strain>
    </source>
</reference>
<reference key="3">
    <citation type="journal article" date="2003" name="Science">
        <title>Empirical analysis of transcriptional activity in the Arabidopsis genome.</title>
        <authorList>
            <person name="Yamada K."/>
            <person name="Lim J."/>
            <person name="Dale J.M."/>
            <person name="Chen H."/>
            <person name="Shinn P."/>
            <person name="Palm C.J."/>
            <person name="Southwick A.M."/>
            <person name="Wu H.C."/>
            <person name="Kim C.J."/>
            <person name="Nguyen M."/>
            <person name="Pham P.K."/>
            <person name="Cheuk R.F."/>
            <person name="Karlin-Newmann G."/>
            <person name="Liu S.X."/>
            <person name="Lam B."/>
            <person name="Sakano H."/>
            <person name="Wu T."/>
            <person name="Yu G."/>
            <person name="Miranda M."/>
            <person name="Quach H.L."/>
            <person name="Tripp M."/>
            <person name="Chang C.H."/>
            <person name="Lee J.M."/>
            <person name="Toriumi M.J."/>
            <person name="Chan M.M."/>
            <person name="Tang C.C."/>
            <person name="Onodera C.S."/>
            <person name="Deng J.M."/>
            <person name="Akiyama K."/>
            <person name="Ansari Y."/>
            <person name="Arakawa T."/>
            <person name="Banh J."/>
            <person name="Banno F."/>
            <person name="Bowser L."/>
            <person name="Brooks S.Y."/>
            <person name="Carninci P."/>
            <person name="Chao Q."/>
            <person name="Choy N."/>
            <person name="Enju A."/>
            <person name="Goldsmith A.D."/>
            <person name="Gurjal M."/>
            <person name="Hansen N.F."/>
            <person name="Hayashizaki Y."/>
            <person name="Johnson-Hopson C."/>
            <person name="Hsuan V.W."/>
            <person name="Iida K."/>
            <person name="Karnes M."/>
            <person name="Khan S."/>
            <person name="Koesema E."/>
            <person name="Ishida J."/>
            <person name="Jiang P.X."/>
            <person name="Jones T."/>
            <person name="Kawai J."/>
            <person name="Kamiya A."/>
            <person name="Meyers C."/>
            <person name="Nakajima M."/>
            <person name="Narusaka M."/>
            <person name="Seki M."/>
            <person name="Sakurai T."/>
            <person name="Satou M."/>
            <person name="Tamse R."/>
            <person name="Vaysberg M."/>
            <person name="Wallender E.K."/>
            <person name="Wong C."/>
            <person name="Yamamura Y."/>
            <person name="Yuan S."/>
            <person name="Shinozaki K."/>
            <person name="Davis R.W."/>
            <person name="Theologis A."/>
            <person name="Ecker J.R."/>
        </authorList>
    </citation>
    <scope>NUCLEOTIDE SEQUENCE [LARGE SCALE MRNA]</scope>
    <source>
        <strain>cv. Columbia</strain>
    </source>
</reference>
<reference key="4">
    <citation type="journal article" date="2002" name="Plant Physiol.">
        <title>FQR1, a novel primary auxin-response gene, encodes a flavin mononucleotide-binding quinone reductase.</title>
        <authorList>
            <person name="Laskowski M.J."/>
            <person name="Dreher K.A."/>
            <person name="Gehring M.A."/>
            <person name="Abel S."/>
            <person name="Gensler A.L."/>
            <person name="Sussex I.M."/>
        </authorList>
    </citation>
    <scope>FUNCTION</scope>
    <scope>CATALYTIC ACTIVITY</scope>
    <scope>COFACTOR</scope>
    <scope>INDUCTION BY AUXIN</scope>
</reference>
<reference key="5">
    <citation type="journal article" date="2004" name="Mol. Cell. Proteomics">
        <title>Identification of new intrinsic proteins in Arabidopsis plasma membrane proteome.</title>
        <authorList>
            <person name="Marmagne A."/>
            <person name="Rouet M.-A."/>
            <person name="Ferro M."/>
            <person name="Rolland N."/>
            <person name="Alcon C."/>
            <person name="Joyard J."/>
            <person name="Garin J."/>
            <person name="Barbier-Brygoo H."/>
            <person name="Ephritikhine G."/>
        </authorList>
    </citation>
    <scope>IDENTIFICATION BY MASS SPECTROMETRY</scope>
    <scope>SUBCELLULAR LOCATION [LARGE SCALE ANALYSIS]</scope>
</reference>
<reference key="6">
    <citation type="journal article" date="2013" name="Physiol. Plantarum">
        <title>A dual role for plant quinone reductases in host-fungus interaction.</title>
        <authorList>
            <person name="Heyno E."/>
            <person name="Alkan N."/>
            <person name="Fluhr R."/>
        </authorList>
    </citation>
    <scope>DISRUPTION PHENOTYPE</scope>
</reference>
<proteinExistence type="evidence at protein level"/>
<accession>Q9LSQ5</accession>
<feature type="chain" id="PRO_0000431283" description="NAD(P)H dehydrogenase (quinone) FQR1">
    <location>
        <begin position="1"/>
        <end position="204"/>
    </location>
</feature>
<feature type="domain" description="Flavodoxin-like" evidence="2">
    <location>
        <begin position="5"/>
        <end position="192"/>
    </location>
</feature>
<feature type="binding site" evidence="2">
    <location>
        <begin position="11"/>
        <end position="15"/>
    </location>
    <ligand>
        <name>FMN</name>
        <dbReference type="ChEBI" id="CHEBI:58210"/>
    </ligand>
</feature>
<feature type="binding site" evidence="1">
    <location>
        <position position="13"/>
    </location>
    <ligand>
        <name>NAD(+)</name>
        <dbReference type="ChEBI" id="CHEBI:57540"/>
    </ligand>
</feature>
<feature type="binding site" evidence="2">
    <location>
        <begin position="112"/>
        <end position="165"/>
    </location>
    <ligand>
        <name>FMN</name>
        <dbReference type="ChEBI" id="CHEBI:58210"/>
    </ligand>
</feature>
<feature type="binding site" evidence="1">
    <location>
        <position position="136"/>
    </location>
    <ligand>
        <name>FMN</name>
        <dbReference type="ChEBI" id="CHEBI:58210"/>
    </ligand>
</feature>
<sequence>MATKVYIVYYSMYGHVEKLAEEIRKGAASVEGVEAKLWQVPETLHEEALSKMSAPPKSESPIITPNELAEADGFVFGFPTRFGMMAAQFKAFLDATGGLWRAQALAGKPAGIFYSTGSQGGGQETTALTAITQLVHHGMLFVPIGYTFGAGMFEMENVKGGSPYGAGTFAGDGSRQPTELELQQAFHQGQYIASITKKLKGSTA</sequence>
<evidence type="ECO:0000250" key="1">
    <source>
        <dbReference type="UniProtKB" id="P0A8G6"/>
    </source>
</evidence>
<evidence type="ECO:0000255" key="2">
    <source>
        <dbReference type="PROSITE-ProRule" id="PRU00088"/>
    </source>
</evidence>
<evidence type="ECO:0000269" key="3">
    <source>
    </source>
</evidence>
<evidence type="ECO:0000269" key="4">
    <source>
    </source>
</evidence>
<evidence type="ECO:0000269" key="5">
    <source>
    </source>
</evidence>
<evidence type="ECO:0000303" key="6">
    <source>
    </source>
</evidence>
<evidence type="ECO:0000305" key="7"/>
<evidence type="ECO:0000305" key="8">
    <source>
    </source>
</evidence>
<evidence type="ECO:0000312" key="9">
    <source>
        <dbReference type="Araport" id="AT5G54500"/>
    </source>
</evidence>
<evidence type="ECO:0000312" key="10">
    <source>
        <dbReference type="EMBL" id="BAA97523.1"/>
    </source>
</evidence>
<protein>
    <recommendedName>
        <fullName evidence="7">NAD(P)H dehydrogenase (quinone) FQR1</fullName>
        <ecNumber evidence="3">1.6.5.2</ecNumber>
    </recommendedName>
    <alternativeName>
        <fullName evidence="6">Flavodoxin-like quinone reductase 1</fullName>
    </alternativeName>
</protein>
<keyword id="KW-0025">Alternative splicing</keyword>
<keyword id="KW-1003">Cell membrane</keyword>
<keyword id="KW-0285">Flavoprotein</keyword>
<keyword id="KW-0288">FMN</keyword>
<keyword id="KW-0472">Membrane</keyword>
<keyword id="KW-0520">NAD</keyword>
<keyword id="KW-0521">NADP</keyword>
<keyword id="KW-0547">Nucleotide-binding</keyword>
<keyword id="KW-0560">Oxidoreductase</keyword>
<keyword id="KW-1185">Reference proteome</keyword>
<keyword id="KW-0346">Stress response</keyword>
<name>FQR1_ARATH</name>